<protein>
    <recommendedName>
        <fullName>Hemoglobin subunit alpha</fullName>
    </recommendedName>
    <alternativeName>
        <fullName>Alpha-globin</fullName>
    </alternativeName>
    <alternativeName>
        <fullName>Hemoglobin alpha chain</fullName>
    </alternativeName>
    <component>
        <recommendedName>
            <fullName evidence="2">Hemopressin</fullName>
        </recommendedName>
    </component>
</protein>
<name>HBA_ANTPA</name>
<organism>
    <name type="scientific">Antrozous pallidus</name>
    <name type="common">Pallid bat</name>
    <name type="synonym">Vespertilio pallidus</name>
    <dbReference type="NCBI Taxonomy" id="9440"/>
    <lineage>
        <taxon>Eukaryota</taxon>
        <taxon>Metazoa</taxon>
        <taxon>Chordata</taxon>
        <taxon>Craniata</taxon>
        <taxon>Vertebrata</taxon>
        <taxon>Euteleostomi</taxon>
        <taxon>Mammalia</taxon>
        <taxon>Eutheria</taxon>
        <taxon>Laurasiatheria</taxon>
        <taxon>Chiroptera</taxon>
        <taxon>Yangochiroptera</taxon>
        <taxon>Vespertilionidae</taxon>
        <taxon>Antrozous</taxon>
    </lineage>
</organism>
<keyword id="KW-0007">Acetylation</keyword>
<keyword id="KW-0903">Direct protein sequencing</keyword>
<keyword id="KW-0349">Heme</keyword>
<keyword id="KW-0408">Iron</keyword>
<keyword id="KW-0479">Metal-binding</keyword>
<keyword id="KW-0561">Oxygen transport</keyword>
<keyword id="KW-0597">Phosphoprotein</keyword>
<keyword id="KW-0813">Transport</keyword>
<dbReference type="PIR" id="A29702">
    <property type="entry name" value="A29702"/>
</dbReference>
<dbReference type="SMR" id="P14387"/>
<dbReference type="GO" id="GO:0072562">
    <property type="term" value="C:blood microparticle"/>
    <property type="evidence" value="ECO:0007669"/>
    <property type="project" value="TreeGrafter"/>
</dbReference>
<dbReference type="GO" id="GO:0031838">
    <property type="term" value="C:haptoglobin-hemoglobin complex"/>
    <property type="evidence" value="ECO:0007669"/>
    <property type="project" value="TreeGrafter"/>
</dbReference>
<dbReference type="GO" id="GO:0005833">
    <property type="term" value="C:hemoglobin complex"/>
    <property type="evidence" value="ECO:0007669"/>
    <property type="project" value="InterPro"/>
</dbReference>
<dbReference type="GO" id="GO:0031720">
    <property type="term" value="F:haptoglobin binding"/>
    <property type="evidence" value="ECO:0007669"/>
    <property type="project" value="TreeGrafter"/>
</dbReference>
<dbReference type="GO" id="GO:0020037">
    <property type="term" value="F:heme binding"/>
    <property type="evidence" value="ECO:0007669"/>
    <property type="project" value="InterPro"/>
</dbReference>
<dbReference type="GO" id="GO:0005506">
    <property type="term" value="F:iron ion binding"/>
    <property type="evidence" value="ECO:0007669"/>
    <property type="project" value="InterPro"/>
</dbReference>
<dbReference type="GO" id="GO:0043177">
    <property type="term" value="F:organic acid binding"/>
    <property type="evidence" value="ECO:0007669"/>
    <property type="project" value="TreeGrafter"/>
</dbReference>
<dbReference type="GO" id="GO:0019825">
    <property type="term" value="F:oxygen binding"/>
    <property type="evidence" value="ECO:0007669"/>
    <property type="project" value="InterPro"/>
</dbReference>
<dbReference type="GO" id="GO:0005344">
    <property type="term" value="F:oxygen carrier activity"/>
    <property type="evidence" value="ECO:0007669"/>
    <property type="project" value="UniProtKB-KW"/>
</dbReference>
<dbReference type="GO" id="GO:0004601">
    <property type="term" value="F:peroxidase activity"/>
    <property type="evidence" value="ECO:0007669"/>
    <property type="project" value="TreeGrafter"/>
</dbReference>
<dbReference type="GO" id="GO:0042744">
    <property type="term" value="P:hydrogen peroxide catabolic process"/>
    <property type="evidence" value="ECO:0007669"/>
    <property type="project" value="TreeGrafter"/>
</dbReference>
<dbReference type="CDD" id="cd08927">
    <property type="entry name" value="Hb-alpha-like"/>
    <property type="match status" value="1"/>
</dbReference>
<dbReference type="FunFam" id="1.10.490.10:FF:000002">
    <property type="entry name" value="Hemoglobin subunit alpha"/>
    <property type="match status" value="1"/>
</dbReference>
<dbReference type="Gene3D" id="1.10.490.10">
    <property type="entry name" value="Globins"/>
    <property type="match status" value="1"/>
</dbReference>
<dbReference type="InterPro" id="IPR000971">
    <property type="entry name" value="Globin"/>
</dbReference>
<dbReference type="InterPro" id="IPR009050">
    <property type="entry name" value="Globin-like_sf"/>
</dbReference>
<dbReference type="InterPro" id="IPR012292">
    <property type="entry name" value="Globin/Proto"/>
</dbReference>
<dbReference type="InterPro" id="IPR002338">
    <property type="entry name" value="Hemoglobin_a-typ"/>
</dbReference>
<dbReference type="InterPro" id="IPR050056">
    <property type="entry name" value="Hemoglobin_oxygen_transport"/>
</dbReference>
<dbReference type="InterPro" id="IPR002339">
    <property type="entry name" value="Hemoglobin_pi"/>
</dbReference>
<dbReference type="PANTHER" id="PTHR11442">
    <property type="entry name" value="HEMOGLOBIN FAMILY MEMBER"/>
    <property type="match status" value="1"/>
</dbReference>
<dbReference type="PANTHER" id="PTHR11442:SF48">
    <property type="entry name" value="HEMOGLOBIN SUBUNIT ALPHA"/>
    <property type="match status" value="1"/>
</dbReference>
<dbReference type="Pfam" id="PF00042">
    <property type="entry name" value="Globin"/>
    <property type="match status" value="1"/>
</dbReference>
<dbReference type="PRINTS" id="PR00612">
    <property type="entry name" value="ALPHAHAEM"/>
</dbReference>
<dbReference type="PRINTS" id="PR00815">
    <property type="entry name" value="PIHAEM"/>
</dbReference>
<dbReference type="SUPFAM" id="SSF46458">
    <property type="entry name" value="Globin-like"/>
    <property type="match status" value="1"/>
</dbReference>
<dbReference type="PROSITE" id="PS01033">
    <property type="entry name" value="GLOBIN"/>
    <property type="match status" value="1"/>
</dbReference>
<sequence>MVLSPADKTNVKAAWDKVGGHAGDYGAEALERMFLSFPTTKTYFPHFDLSHGSAQVKGHGKKVGDALGNAVAHMDDLPGALSALSDLHAYKLRVDPVNFKLLSHCLLVTLACHHPGDFTPAVHASLDKFLASVSTVLVSKYR</sequence>
<comment type="function">
    <text>Involved in oxygen transport from the lung to the various peripheral tissues.</text>
</comment>
<comment type="function">
    <molecule>Hemopressin</molecule>
    <text evidence="2">Hemopressin acts as an antagonist peptide of the cannabinoid receptor CNR1. Hemopressin-binding efficiently blocks cannabinoid receptor CNR1 and subsequent signaling.</text>
</comment>
<comment type="subunit">
    <text>Heterotetramer of two alpha chains and two beta chains.</text>
</comment>
<comment type="tissue specificity">
    <text>Red blood cells.</text>
</comment>
<comment type="similarity">
    <text evidence="5">Belongs to the globin family.</text>
</comment>
<feature type="initiator methionine" description="Removed" evidence="3">
    <location>
        <position position="1"/>
    </location>
</feature>
<feature type="chain" id="PRO_0000052554" description="Hemoglobin subunit alpha">
    <location>
        <begin position="2"/>
        <end position="142"/>
    </location>
</feature>
<feature type="peptide" id="PRO_0000455838" description="Hemopressin" evidence="2">
    <location>
        <begin position="96"/>
        <end position="104"/>
    </location>
</feature>
<feature type="domain" description="Globin" evidence="5">
    <location>
        <begin position="2"/>
        <end position="142"/>
    </location>
</feature>
<feature type="binding site" evidence="5">
    <location>
        <position position="59"/>
    </location>
    <ligand>
        <name>O2</name>
        <dbReference type="ChEBI" id="CHEBI:15379"/>
    </ligand>
</feature>
<feature type="binding site" description="proximal binding residue" evidence="5">
    <location>
        <position position="88"/>
    </location>
    <ligand>
        <name>heme b</name>
        <dbReference type="ChEBI" id="CHEBI:60344"/>
    </ligand>
    <ligandPart>
        <name>Fe</name>
        <dbReference type="ChEBI" id="CHEBI:18248"/>
    </ligandPart>
</feature>
<feature type="modified residue" description="Phosphoserine" evidence="4">
    <location>
        <position position="4"/>
    </location>
</feature>
<feature type="modified residue" description="N6-succinyllysine" evidence="1">
    <location>
        <position position="8"/>
    </location>
</feature>
<feature type="modified residue" description="Phosphothreonine" evidence="4">
    <location>
        <position position="9"/>
    </location>
</feature>
<feature type="modified residue" description="N6-succinyllysine" evidence="1">
    <location>
        <position position="12"/>
    </location>
</feature>
<feature type="modified residue" description="N6-acetyllysine; alternate" evidence="4">
    <location>
        <position position="17"/>
    </location>
</feature>
<feature type="modified residue" description="N6-succinyllysine; alternate" evidence="1">
    <location>
        <position position="17"/>
    </location>
</feature>
<feature type="modified residue" description="Phosphotyrosine" evidence="4">
    <location>
        <position position="25"/>
    </location>
</feature>
<feature type="modified residue" description="Phosphoserine" evidence="4">
    <location>
        <position position="36"/>
    </location>
</feature>
<feature type="modified residue" description="N6-succinyllysine" evidence="1">
    <location>
        <position position="41"/>
    </location>
</feature>
<feature type="modified residue" description="Phosphoserine" evidence="4">
    <location>
        <position position="50"/>
    </location>
</feature>
<feature type="modified residue" description="Phosphoserine" evidence="1">
    <location>
        <position position="103"/>
    </location>
</feature>
<feature type="modified residue" description="Phosphothreonine" evidence="1">
    <location>
        <position position="109"/>
    </location>
</feature>
<feature type="modified residue" description="Phosphoserine" evidence="1">
    <location>
        <position position="125"/>
    </location>
</feature>
<feature type="modified residue" description="Phosphoserine" evidence="1">
    <location>
        <position position="132"/>
    </location>
</feature>
<feature type="modified residue" description="Phosphothreonine" evidence="1">
    <location>
        <position position="135"/>
    </location>
</feature>
<feature type="modified residue" description="Phosphoserine" evidence="1">
    <location>
        <position position="139"/>
    </location>
</feature>
<gene>
    <name type="primary">HBA</name>
</gene>
<proteinExistence type="evidence at protein level"/>
<evidence type="ECO:0000250" key="1">
    <source>
        <dbReference type="UniProtKB" id="P01942"/>
    </source>
</evidence>
<evidence type="ECO:0000250" key="2">
    <source>
        <dbReference type="UniProtKB" id="P01946"/>
    </source>
</evidence>
<evidence type="ECO:0000250" key="3">
    <source>
        <dbReference type="UniProtKB" id="P18969"/>
    </source>
</evidence>
<evidence type="ECO:0000250" key="4">
    <source>
        <dbReference type="UniProtKB" id="P69905"/>
    </source>
</evidence>
<evidence type="ECO:0000255" key="5">
    <source>
        <dbReference type="PROSITE-ProRule" id="PRU00238"/>
    </source>
</evidence>
<reference key="1">
    <citation type="journal article" date="1987" name="Biol. Chem. Hoppe-Seyler">
        <title>The primary structure of the pallid bat (Antrozous pallidus, Chiroptera) hemoglobin.</title>
        <authorList>
            <person name="Kleinschmidt T."/>
            <person name="Koop B.F."/>
            <person name="Braunitzer G."/>
        </authorList>
    </citation>
    <scope>PROTEIN SEQUENCE OF 2-142</scope>
</reference>
<accession>P14387</accession>